<reference key="1">
    <citation type="journal article" date="2005" name="Science">
        <title>The transcriptional landscape of the mammalian genome.</title>
        <authorList>
            <person name="Carninci P."/>
            <person name="Kasukawa T."/>
            <person name="Katayama S."/>
            <person name="Gough J."/>
            <person name="Frith M.C."/>
            <person name="Maeda N."/>
            <person name="Oyama R."/>
            <person name="Ravasi T."/>
            <person name="Lenhard B."/>
            <person name="Wells C."/>
            <person name="Kodzius R."/>
            <person name="Shimokawa K."/>
            <person name="Bajic V.B."/>
            <person name="Brenner S.E."/>
            <person name="Batalov S."/>
            <person name="Forrest A.R."/>
            <person name="Zavolan M."/>
            <person name="Davis M.J."/>
            <person name="Wilming L.G."/>
            <person name="Aidinis V."/>
            <person name="Allen J.E."/>
            <person name="Ambesi-Impiombato A."/>
            <person name="Apweiler R."/>
            <person name="Aturaliya R.N."/>
            <person name="Bailey T.L."/>
            <person name="Bansal M."/>
            <person name="Baxter L."/>
            <person name="Beisel K.W."/>
            <person name="Bersano T."/>
            <person name="Bono H."/>
            <person name="Chalk A.M."/>
            <person name="Chiu K.P."/>
            <person name="Choudhary V."/>
            <person name="Christoffels A."/>
            <person name="Clutterbuck D.R."/>
            <person name="Crowe M.L."/>
            <person name="Dalla E."/>
            <person name="Dalrymple B.P."/>
            <person name="de Bono B."/>
            <person name="Della Gatta G."/>
            <person name="di Bernardo D."/>
            <person name="Down T."/>
            <person name="Engstrom P."/>
            <person name="Fagiolini M."/>
            <person name="Faulkner G."/>
            <person name="Fletcher C.F."/>
            <person name="Fukushima T."/>
            <person name="Furuno M."/>
            <person name="Futaki S."/>
            <person name="Gariboldi M."/>
            <person name="Georgii-Hemming P."/>
            <person name="Gingeras T.R."/>
            <person name="Gojobori T."/>
            <person name="Green R.E."/>
            <person name="Gustincich S."/>
            <person name="Harbers M."/>
            <person name="Hayashi Y."/>
            <person name="Hensch T.K."/>
            <person name="Hirokawa N."/>
            <person name="Hill D."/>
            <person name="Huminiecki L."/>
            <person name="Iacono M."/>
            <person name="Ikeo K."/>
            <person name="Iwama A."/>
            <person name="Ishikawa T."/>
            <person name="Jakt M."/>
            <person name="Kanapin A."/>
            <person name="Katoh M."/>
            <person name="Kawasawa Y."/>
            <person name="Kelso J."/>
            <person name="Kitamura H."/>
            <person name="Kitano H."/>
            <person name="Kollias G."/>
            <person name="Krishnan S.P."/>
            <person name="Kruger A."/>
            <person name="Kummerfeld S.K."/>
            <person name="Kurochkin I.V."/>
            <person name="Lareau L.F."/>
            <person name="Lazarevic D."/>
            <person name="Lipovich L."/>
            <person name="Liu J."/>
            <person name="Liuni S."/>
            <person name="McWilliam S."/>
            <person name="Madan Babu M."/>
            <person name="Madera M."/>
            <person name="Marchionni L."/>
            <person name="Matsuda H."/>
            <person name="Matsuzawa S."/>
            <person name="Miki H."/>
            <person name="Mignone F."/>
            <person name="Miyake S."/>
            <person name="Morris K."/>
            <person name="Mottagui-Tabar S."/>
            <person name="Mulder N."/>
            <person name="Nakano N."/>
            <person name="Nakauchi H."/>
            <person name="Ng P."/>
            <person name="Nilsson R."/>
            <person name="Nishiguchi S."/>
            <person name="Nishikawa S."/>
            <person name="Nori F."/>
            <person name="Ohara O."/>
            <person name="Okazaki Y."/>
            <person name="Orlando V."/>
            <person name="Pang K.C."/>
            <person name="Pavan W.J."/>
            <person name="Pavesi G."/>
            <person name="Pesole G."/>
            <person name="Petrovsky N."/>
            <person name="Piazza S."/>
            <person name="Reed J."/>
            <person name="Reid J.F."/>
            <person name="Ring B.Z."/>
            <person name="Ringwald M."/>
            <person name="Rost B."/>
            <person name="Ruan Y."/>
            <person name="Salzberg S.L."/>
            <person name="Sandelin A."/>
            <person name="Schneider C."/>
            <person name="Schoenbach C."/>
            <person name="Sekiguchi K."/>
            <person name="Semple C.A."/>
            <person name="Seno S."/>
            <person name="Sessa L."/>
            <person name="Sheng Y."/>
            <person name="Shibata Y."/>
            <person name="Shimada H."/>
            <person name="Shimada K."/>
            <person name="Silva D."/>
            <person name="Sinclair B."/>
            <person name="Sperling S."/>
            <person name="Stupka E."/>
            <person name="Sugiura K."/>
            <person name="Sultana R."/>
            <person name="Takenaka Y."/>
            <person name="Taki K."/>
            <person name="Tammoja K."/>
            <person name="Tan S.L."/>
            <person name="Tang S."/>
            <person name="Taylor M.S."/>
            <person name="Tegner J."/>
            <person name="Teichmann S.A."/>
            <person name="Ueda H.R."/>
            <person name="van Nimwegen E."/>
            <person name="Verardo R."/>
            <person name="Wei C.L."/>
            <person name="Yagi K."/>
            <person name="Yamanishi H."/>
            <person name="Zabarovsky E."/>
            <person name="Zhu S."/>
            <person name="Zimmer A."/>
            <person name="Hide W."/>
            <person name="Bult C."/>
            <person name="Grimmond S.M."/>
            <person name="Teasdale R.D."/>
            <person name="Liu E.T."/>
            <person name="Brusic V."/>
            <person name="Quackenbush J."/>
            <person name="Wahlestedt C."/>
            <person name="Mattick J.S."/>
            <person name="Hume D.A."/>
            <person name="Kai C."/>
            <person name="Sasaki D."/>
            <person name="Tomaru Y."/>
            <person name="Fukuda S."/>
            <person name="Kanamori-Katayama M."/>
            <person name="Suzuki M."/>
            <person name="Aoki J."/>
            <person name="Arakawa T."/>
            <person name="Iida J."/>
            <person name="Imamura K."/>
            <person name="Itoh M."/>
            <person name="Kato T."/>
            <person name="Kawaji H."/>
            <person name="Kawagashira N."/>
            <person name="Kawashima T."/>
            <person name="Kojima M."/>
            <person name="Kondo S."/>
            <person name="Konno H."/>
            <person name="Nakano K."/>
            <person name="Ninomiya N."/>
            <person name="Nishio T."/>
            <person name="Okada M."/>
            <person name="Plessy C."/>
            <person name="Shibata K."/>
            <person name="Shiraki T."/>
            <person name="Suzuki S."/>
            <person name="Tagami M."/>
            <person name="Waki K."/>
            <person name="Watahiki A."/>
            <person name="Okamura-Oho Y."/>
            <person name="Suzuki H."/>
            <person name="Kawai J."/>
            <person name="Hayashizaki Y."/>
        </authorList>
    </citation>
    <scope>NUCLEOTIDE SEQUENCE [LARGE SCALE MRNA] (ISOFORMS 2 AND 3)</scope>
    <source>
        <strain>C57BL/6J</strain>
        <strain>NOD</strain>
        <tissue>Cerebellum</tissue>
        <tissue>Dendritic cell</tissue>
    </source>
</reference>
<reference key="2">
    <citation type="journal article" date="2009" name="PLoS Biol.">
        <title>Lineage-specific biology revealed by a finished genome assembly of the mouse.</title>
        <authorList>
            <person name="Church D.M."/>
            <person name="Goodstadt L."/>
            <person name="Hillier L.W."/>
            <person name="Zody M.C."/>
            <person name="Goldstein S."/>
            <person name="She X."/>
            <person name="Bult C.J."/>
            <person name="Agarwala R."/>
            <person name="Cherry J.L."/>
            <person name="DiCuccio M."/>
            <person name="Hlavina W."/>
            <person name="Kapustin Y."/>
            <person name="Meric P."/>
            <person name="Maglott D."/>
            <person name="Birtle Z."/>
            <person name="Marques A.C."/>
            <person name="Graves T."/>
            <person name="Zhou S."/>
            <person name="Teague B."/>
            <person name="Potamousis K."/>
            <person name="Churas C."/>
            <person name="Place M."/>
            <person name="Herschleb J."/>
            <person name="Runnheim R."/>
            <person name="Forrest D."/>
            <person name="Amos-Landgraf J."/>
            <person name="Schwartz D.C."/>
            <person name="Cheng Z."/>
            <person name="Lindblad-Toh K."/>
            <person name="Eichler E.E."/>
            <person name="Ponting C.P."/>
        </authorList>
    </citation>
    <scope>NUCLEOTIDE SEQUENCE [LARGE SCALE GENOMIC DNA]</scope>
    <source>
        <strain>C57BL/6J</strain>
    </source>
</reference>
<reference key="3">
    <citation type="journal article" date="2004" name="Genome Res.">
        <title>The status, quality, and expansion of the NIH full-length cDNA project: the Mammalian Gene Collection (MGC).</title>
        <authorList>
            <consortium name="The MGC Project Team"/>
        </authorList>
    </citation>
    <scope>NUCLEOTIDE SEQUENCE [LARGE SCALE MRNA] (ISOFORM 2)</scope>
    <source>
        <tissue>Embryo</tissue>
    </source>
</reference>
<accession>A2AI05</accession>
<accession>Q3TQZ6</accession>
<accession>Q80WC5</accession>
<gene>
    <name evidence="2" type="primary">Ndor1</name>
</gene>
<evidence type="ECO:0000250" key="1">
    <source>
        <dbReference type="UniProtKB" id="Q9UHB4"/>
    </source>
</evidence>
<evidence type="ECO:0000255" key="2">
    <source>
        <dbReference type="HAMAP-Rule" id="MF_03178"/>
    </source>
</evidence>
<evidence type="ECO:0000303" key="3">
    <source>
    </source>
</evidence>
<evidence type="ECO:0000303" key="4">
    <source>
    </source>
</evidence>
<organism>
    <name type="scientific">Mus musculus</name>
    <name type="common">Mouse</name>
    <dbReference type="NCBI Taxonomy" id="10090"/>
    <lineage>
        <taxon>Eukaryota</taxon>
        <taxon>Metazoa</taxon>
        <taxon>Chordata</taxon>
        <taxon>Craniata</taxon>
        <taxon>Vertebrata</taxon>
        <taxon>Euteleostomi</taxon>
        <taxon>Mammalia</taxon>
        <taxon>Eutheria</taxon>
        <taxon>Euarchontoglires</taxon>
        <taxon>Glires</taxon>
        <taxon>Rodentia</taxon>
        <taxon>Myomorpha</taxon>
        <taxon>Muroidea</taxon>
        <taxon>Muridae</taxon>
        <taxon>Murinae</taxon>
        <taxon>Mus</taxon>
        <taxon>Mus</taxon>
    </lineage>
</organism>
<name>NDOR1_MOUSE</name>
<comment type="function">
    <text evidence="1 2">NADPH-dependent reductase which is a central component of the cytosolic iron-sulfur (Fe-S) protein assembly (CIA) machinery. Transfers electrons from NADPH via its FAD and FMN prosthetic groups to the [2Fe-2S] cluster of CIAPIN1, another key component of the CIA machinery. In turn, this reduced cluster provides electrons for assembly of cytosolic iron-sulfur cluster proteins. It can also reduce the [2Fe-2S] cluster of CISD1 and activate this protein implicated in Fe/S cluster repair (By similarity). In vitro can fully activate methionine synthase/MTR in the presence of soluble cytochrome b5/CYB5A (By similarity).</text>
</comment>
<comment type="catalytic activity">
    <reaction evidence="2">
        <text>2 oxidized [2Fe-2S]-[protein] + NADPH = 2 reduced [2Fe-2S]-[protein] + NADP(+) + H(+)</text>
        <dbReference type="Rhea" id="RHEA:67716"/>
        <dbReference type="Rhea" id="RHEA-COMP:17327"/>
        <dbReference type="Rhea" id="RHEA-COMP:17328"/>
        <dbReference type="ChEBI" id="CHEBI:15378"/>
        <dbReference type="ChEBI" id="CHEBI:33737"/>
        <dbReference type="ChEBI" id="CHEBI:33738"/>
        <dbReference type="ChEBI" id="CHEBI:57783"/>
        <dbReference type="ChEBI" id="CHEBI:58349"/>
    </reaction>
    <physiologicalReaction direction="left-to-right" evidence="2">
        <dbReference type="Rhea" id="RHEA:67717"/>
    </physiologicalReaction>
</comment>
<comment type="cofactor">
    <cofactor evidence="2">
        <name>FAD</name>
        <dbReference type="ChEBI" id="CHEBI:57692"/>
    </cofactor>
</comment>
<comment type="cofactor">
    <cofactor evidence="2">
        <name>FMN</name>
        <dbReference type="ChEBI" id="CHEBI:58210"/>
    </cofactor>
</comment>
<comment type="subunit">
    <text evidence="1 2">Interacts with CIAPIN1; as part of the cytosolic iron-sulfur (Fe-S) protein assembly (CIA) machinery (By similarity). Interacts with DCPS (By similarity).</text>
</comment>
<comment type="subcellular location">
    <subcellularLocation>
        <location evidence="2">Cytoplasm</location>
        <location evidence="2">Perinuclear region</location>
    </subcellularLocation>
    <text evidence="2">Concentrated in perinuclear structure.</text>
</comment>
<comment type="alternative products">
    <event type="alternative splicing"/>
    <isoform>
        <id>A2AI05-1</id>
        <name>1</name>
        <sequence type="displayed"/>
    </isoform>
    <isoform>
        <id>A2AI05-2</id>
        <name>2</name>
        <sequence type="described" ref="VSP_031489"/>
    </isoform>
    <isoform>
        <id>A2AI05-3</id>
        <name>3</name>
        <sequence type="described" ref="VSP_031488 VSP_031490 VSP_031491"/>
    </isoform>
</comment>
<comment type="similarity">
    <text evidence="2">Belongs to the NADPH-dependent diflavin oxidoreductase NDOR1 family.</text>
</comment>
<comment type="similarity">
    <text evidence="2">In the N-terminal section; belongs to the flavodoxin family.</text>
</comment>
<comment type="similarity">
    <text evidence="2">In the C-terminal section; belongs to the flavoprotein pyridine nucleotide cytochrome reductase family.</text>
</comment>
<proteinExistence type="evidence at transcript level"/>
<dbReference type="EC" id="1.18.1.-" evidence="2"/>
<dbReference type="EMBL" id="AK163207">
    <property type="protein sequence ID" value="BAE37235.1"/>
    <property type="molecule type" value="mRNA"/>
</dbReference>
<dbReference type="EMBL" id="AK169885">
    <property type="protein sequence ID" value="BAE41435.1"/>
    <property type="molecule type" value="mRNA"/>
</dbReference>
<dbReference type="EMBL" id="AL732309">
    <property type="status" value="NOT_ANNOTATED_CDS"/>
    <property type="molecule type" value="Genomic_DNA"/>
</dbReference>
<dbReference type="EMBL" id="BC049789">
    <property type="protein sequence ID" value="AAH49789.1"/>
    <property type="molecule type" value="mRNA"/>
</dbReference>
<dbReference type="CCDS" id="CCDS38069.1">
    <molecule id="A2AI05-1"/>
</dbReference>
<dbReference type="CCDS" id="CCDS57157.1">
    <molecule id="A2AI05-2"/>
</dbReference>
<dbReference type="RefSeq" id="NP_001075945.1">
    <molecule id="A2AI05-1"/>
    <property type="nucleotide sequence ID" value="NM_001082476.2"/>
</dbReference>
<dbReference type="RefSeq" id="NP_001239470.1">
    <molecule id="A2AI05-2"/>
    <property type="nucleotide sequence ID" value="NM_001252541.1"/>
</dbReference>
<dbReference type="SMR" id="A2AI05"/>
<dbReference type="BioGRID" id="219640">
    <property type="interactions" value="6"/>
</dbReference>
<dbReference type="FunCoup" id="A2AI05">
    <property type="interactions" value="3296"/>
</dbReference>
<dbReference type="STRING" id="10090.ENSMUSP00000109989"/>
<dbReference type="iPTMnet" id="A2AI05"/>
<dbReference type="PhosphoSitePlus" id="A2AI05"/>
<dbReference type="PaxDb" id="10090-ENSMUSP00000109989"/>
<dbReference type="PeptideAtlas" id="A2AI05"/>
<dbReference type="ProteomicsDB" id="253038">
    <molecule id="A2AI05-1"/>
</dbReference>
<dbReference type="ProteomicsDB" id="253039">
    <molecule id="A2AI05-2"/>
</dbReference>
<dbReference type="ProteomicsDB" id="253040">
    <molecule id="A2AI05-3"/>
</dbReference>
<dbReference type="Pumba" id="A2AI05"/>
<dbReference type="DNASU" id="78797"/>
<dbReference type="Ensembl" id="ENSMUST00000100329.10">
    <molecule id="A2AI05-2"/>
    <property type="protein sequence ID" value="ENSMUSP00000097903.4"/>
    <property type="gene ID" value="ENSMUSG00000006471.19"/>
</dbReference>
<dbReference type="Ensembl" id="ENSMUST00000114349.9">
    <molecule id="A2AI05-1"/>
    <property type="protein sequence ID" value="ENSMUSP00000109989.3"/>
    <property type="gene ID" value="ENSMUSG00000006471.19"/>
</dbReference>
<dbReference type="GeneID" id="78797"/>
<dbReference type="KEGG" id="mmu:78797"/>
<dbReference type="UCSC" id="uc008iqw.2">
    <molecule id="A2AI05-1"/>
    <property type="organism name" value="mouse"/>
</dbReference>
<dbReference type="UCSC" id="uc012brw.2">
    <molecule id="A2AI05-2"/>
    <property type="organism name" value="mouse"/>
</dbReference>
<dbReference type="AGR" id="MGI:1926047"/>
<dbReference type="CTD" id="27158"/>
<dbReference type="MGI" id="MGI:1926047">
    <property type="gene designation" value="Ndor1"/>
</dbReference>
<dbReference type="VEuPathDB" id="HostDB:ENSMUSG00000006471"/>
<dbReference type="eggNOG" id="KOG1159">
    <property type="taxonomic scope" value="Eukaryota"/>
</dbReference>
<dbReference type="GeneTree" id="ENSGT00930000151050"/>
<dbReference type="HOGENOM" id="CLU_001570_17_6_1"/>
<dbReference type="InParanoid" id="A2AI05"/>
<dbReference type="OMA" id="DIMSIPR"/>
<dbReference type="OrthoDB" id="1856718at2759"/>
<dbReference type="PhylomeDB" id="A2AI05"/>
<dbReference type="TreeFam" id="TF105716"/>
<dbReference type="BioGRID-ORCS" id="78797">
    <property type="hits" value="23 hits in 78 CRISPR screens"/>
</dbReference>
<dbReference type="PRO" id="PR:A2AI05"/>
<dbReference type="Proteomes" id="UP000000589">
    <property type="component" value="Chromosome 2"/>
</dbReference>
<dbReference type="RNAct" id="A2AI05">
    <property type="molecule type" value="protein"/>
</dbReference>
<dbReference type="Bgee" id="ENSMUSG00000006471">
    <property type="expression patterns" value="Expressed in retinal neural layer and 164 other cell types or tissues"/>
</dbReference>
<dbReference type="ExpressionAtlas" id="A2AI05">
    <property type="expression patterns" value="baseline and differential"/>
</dbReference>
<dbReference type="GO" id="GO:0005829">
    <property type="term" value="C:cytosol"/>
    <property type="evidence" value="ECO:0000250"/>
    <property type="project" value="UniProtKB"/>
</dbReference>
<dbReference type="GO" id="GO:0045111">
    <property type="term" value="C:intermediate filament cytoskeleton"/>
    <property type="evidence" value="ECO:0007669"/>
    <property type="project" value="Ensembl"/>
</dbReference>
<dbReference type="GO" id="GO:0005654">
    <property type="term" value="C:nucleoplasm"/>
    <property type="evidence" value="ECO:0007669"/>
    <property type="project" value="Ensembl"/>
</dbReference>
<dbReference type="GO" id="GO:0048471">
    <property type="term" value="C:perinuclear region of cytoplasm"/>
    <property type="evidence" value="ECO:0007669"/>
    <property type="project" value="UniProtKB-SubCell"/>
</dbReference>
<dbReference type="GO" id="GO:0009055">
    <property type="term" value="F:electron transfer activity"/>
    <property type="evidence" value="ECO:0000250"/>
    <property type="project" value="UniProtKB"/>
</dbReference>
<dbReference type="GO" id="GO:0071949">
    <property type="term" value="F:FAD binding"/>
    <property type="evidence" value="ECO:0007669"/>
    <property type="project" value="Ensembl"/>
</dbReference>
<dbReference type="GO" id="GO:0010181">
    <property type="term" value="F:FMN binding"/>
    <property type="evidence" value="ECO:0007669"/>
    <property type="project" value="UniProtKB-UniRule"/>
</dbReference>
<dbReference type="GO" id="GO:0070402">
    <property type="term" value="F:NADPH binding"/>
    <property type="evidence" value="ECO:0007669"/>
    <property type="project" value="Ensembl"/>
</dbReference>
<dbReference type="GO" id="GO:0003958">
    <property type="term" value="F:NADPH-hemoprotein reductase activity"/>
    <property type="evidence" value="ECO:0007669"/>
    <property type="project" value="Ensembl"/>
</dbReference>
<dbReference type="GO" id="GO:0160246">
    <property type="term" value="F:NADPH-iron-sulfur [2Fe-2S] protein oxidoreductase activity"/>
    <property type="evidence" value="ECO:0000250"/>
    <property type="project" value="UniProtKB"/>
</dbReference>
<dbReference type="GO" id="GO:0016653">
    <property type="term" value="F:oxidoreductase activity, acting on NAD(P)H, heme protein as acceptor"/>
    <property type="evidence" value="ECO:0000250"/>
    <property type="project" value="UniProtKB"/>
</dbReference>
<dbReference type="GO" id="GO:0022900">
    <property type="term" value="P:electron transport chain"/>
    <property type="evidence" value="ECO:0007669"/>
    <property type="project" value="Ensembl"/>
</dbReference>
<dbReference type="GO" id="GO:0016226">
    <property type="term" value="P:iron-sulfur cluster assembly"/>
    <property type="evidence" value="ECO:0007669"/>
    <property type="project" value="UniProtKB-UniRule"/>
</dbReference>
<dbReference type="FunFam" id="3.40.50.80:FF:000001">
    <property type="entry name" value="NADPH--cytochrome P450 reductase 1"/>
    <property type="match status" value="1"/>
</dbReference>
<dbReference type="FunFam" id="1.20.990.10:FF:000008">
    <property type="entry name" value="NADPH-dependent diflavin oxidoreductase 1"/>
    <property type="match status" value="1"/>
</dbReference>
<dbReference type="FunFam" id="3.40.50.360:FF:000015">
    <property type="entry name" value="NADPH-dependent diflavin oxidoreductase 1"/>
    <property type="match status" value="1"/>
</dbReference>
<dbReference type="Gene3D" id="3.40.50.360">
    <property type="match status" value="1"/>
</dbReference>
<dbReference type="Gene3D" id="1.20.990.10">
    <property type="entry name" value="NADPH-cytochrome p450 Reductase, Chain A, domain 3"/>
    <property type="match status" value="1"/>
</dbReference>
<dbReference type="Gene3D" id="3.40.50.80">
    <property type="entry name" value="Nucleotide-binding domain of ferredoxin-NADP reductase (FNR) module"/>
    <property type="match status" value="1"/>
</dbReference>
<dbReference type="Gene3D" id="2.40.30.10">
    <property type="entry name" value="Translation factors"/>
    <property type="match status" value="1"/>
</dbReference>
<dbReference type="HAMAP" id="MF_03178">
    <property type="entry name" value="NDOR1"/>
    <property type="match status" value="1"/>
</dbReference>
<dbReference type="InterPro" id="IPR003097">
    <property type="entry name" value="CysJ-like_FAD-binding"/>
</dbReference>
<dbReference type="InterPro" id="IPR017927">
    <property type="entry name" value="FAD-bd_FR_type"/>
</dbReference>
<dbReference type="InterPro" id="IPR001094">
    <property type="entry name" value="Flavdoxin-like"/>
</dbReference>
<dbReference type="InterPro" id="IPR008254">
    <property type="entry name" value="Flavodoxin/NO_synth"/>
</dbReference>
<dbReference type="InterPro" id="IPR001709">
    <property type="entry name" value="Flavoprot_Pyr_Nucl_cyt_Rdtase"/>
</dbReference>
<dbReference type="InterPro" id="IPR029039">
    <property type="entry name" value="Flavoprotein-like_sf"/>
</dbReference>
<dbReference type="InterPro" id="IPR039261">
    <property type="entry name" value="FNR_nucleotide-bd"/>
</dbReference>
<dbReference type="InterPro" id="IPR023173">
    <property type="entry name" value="NADPH_Cyt_P450_Rdtase_alpha"/>
</dbReference>
<dbReference type="InterPro" id="IPR028879">
    <property type="entry name" value="NDOR1"/>
</dbReference>
<dbReference type="InterPro" id="IPR001433">
    <property type="entry name" value="OxRdtase_FAD/NAD-bd"/>
</dbReference>
<dbReference type="InterPro" id="IPR017938">
    <property type="entry name" value="Riboflavin_synthase-like_b-brl"/>
</dbReference>
<dbReference type="PANTHER" id="PTHR19384:SF10">
    <property type="entry name" value="NADPH-DEPENDENT DIFLAVIN OXIDOREDUCTASE 1"/>
    <property type="match status" value="1"/>
</dbReference>
<dbReference type="PANTHER" id="PTHR19384">
    <property type="entry name" value="NITRIC OXIDE SYNTHASE-RELATED"/>
    <property type="match status" value="1"/>
</dbReference>
<dbReference type="Pfam" id="PF00667">
    <property type="entry name" value="FAD_binding_1"/>
    <property type="match status" value="1"/>
</dbReference>
<dbReference type="Pfam" id="PF00258">
    <property type="entry name" value="Flavodoxin_1"/>
    <property type="match status" value="1"/>
</dbReference>
<dbReference type="Pfam" id="PF00175">
    <property type="entry name" value="NAD_binding_1"/>
    <property type="match status" value="1"/>
</dbReference>
<dbReference type="PRINTS" id="PR00369">
    <property type="entry name" value="FLAVODOXIN"/>
</dbReference>
<dbReference type="PRINTS" id="PR00371">
    <property type="entry name" value="FPNCR"/>
</dbReference>
<dbReference type="SUPFAM" id="SSF52343">
    <property type="entry name" value="Ferredoxin reductase-like, C-terminal NADP-linked domain"/>
    <property type="match status" value="1"/>
</dbReference>
<dbReference type="SUPFAM" id="SSF52218">
    <property type="entry name" value="Flavoproteins"/>
    <property type="match status" value="1"/>
</dbReference>
<dbReference type="SUPFAM" id="SSF63380">
    <property type="entry name" value="Riboflavin synthase domain-like"/>
    <property type="match status" value="1"/>
</dbReference>
<dbReference type="PROSITE" id="PS51384">
    <property type="entry name" value="FAD_FR"/>
    <property type="match status" value="1"/>
</dbReference>
<dbReference type="PROSITE" id="PS50902">
    <property type="entry name" value="FLAVODOXIN_LIKE"/>
    <property type="match status" value="1"/>
</dbReference>
<feature type="chain" id="PRO_0000319540" description="NADPH-dependent diflavin oxidoreductase 1">
    <location>
        <begin position="1"/>
        <end position="598"/>
    </location>
</feature>
<feature type="domain" description="Flavodoxin-like" evidence="2">
    <location>
        <begin position="6"/>
        <end position="150"/>
    </location>
</feature>
<feature type="domain" description="FAD-binding FR-type" evidence="2">
    <location>
        <begin position="206"/>
        <end position="448"/>
    </location>
</feature>
<feature type="binding site" evidence="2">
    <location>
        <begin position="12"/>
        <end position="17"/>
    </location>
    <ligand>
        <name>FMN</name>
        <dbReference type="ChEBI" id="CHEBI:58210"/>
    </ligand>
</feature>
<feature type="binding site" evidence="2">
    <location>
        <begin position="59"/>
        <end position="62"/>
    </location>
    <ligand>
        <name>FMN</name>
        <dbReference type="ChEBI" id="CHEBI:58210"/>
    </ligand>
</feature>
<feature type="binding site" evidence="2">
    <location>
        <begin position="97"/>
        <end position="106"/>
    </location>
    <ligand>
        <name>FMN</name>
        <dbReference type="ChEBI" id="CHEBI:58210"/>
    </ligand>
</feature>
<feature type="binding site" evidence="2">
    <location>
        <position position="132"/>
    </location>
    <ligand>
        <name>FMN</name>
        <dbReference type="ChEBI" id="CHEBI:58210"/>
    </ligand>
</feature>
<feature type="binding site" evidence="2">
    <location>
        <position position="350"/>
    </location>
    <ligand>
        <name>FAD</name>
        <dbReference type="ChEBI" id="CHEBI:57692"/>
    </ligand>
</feature>
<feature type="binding site" evidence="2">
    <location>
        <begin position="382"/>
        <end position="385"/>
    </location>
    <ligand>
        <name>FAD</name>
        <dbReference type="ChEBI" id="CHEBI:57692"/>
    </ligand>
</feature>
<feature type="binding site" evidence="2">
    <location>
        <begin position="416"/>
        <end position="419"/>
    </location>
    <ligand>
        <name>FAD</name>
        <dbReference type="ChEBI" id="CHEBI:57692"/>
    </ligand>
</feature>
<feature type="binding site" evidence="2">
    <location>
        <position position="461"/>
    </location>
    <ligand>
        <name>NADP(+)</name>
        <dbReference type="ChEBI" id="CHEBI:58349"/>
    </ligand>
</feature>
<feature type="binding site" evidence="2">
    <location>
        <begin position="516"/>
        <end position="517"/>
    </location>
    <ligand>
        <name>NADP(+)</name>
        <dbReference type="ChEBI" id="CHEBI:58349"/>
    </ligand>
</feature>
<feature type="binding site" evidence="2">
    <location>
        <begin position="522"/>
        <end position="526"/>
    </location>
    <ligand>
        <name>NADP(+)</name>
        <dbReference type="ChEBI" id="CHEBI:58349"/>
    </ligand>
</feature>
<feature type="binding site" evidence="2">
    <location>
        <position position="559"/>
    </location>
    <ligand>
        <name>NADP(+)</name>
        <dbReference type="ChEBI" id="CHEBI:58349"/>
    </ligand>
</feature>
<feature type="binding site" evidence="2">
    <location>
        <position position="597"/>
    </location>
    <ligand>
        <name>FAD</name>
        <dbReference type="ChEBI" id="CHEBI:57692"/>
    </ligand>
</feature>
<feature type="splice variant" id="VSP_031488" description="In isoform 3." evidence="4">
    <original>MQVPQLLVLFGSQTGTAQDEAERLGREARRRRLGCRVQALDSYSV</original>
    <variation>MRCREGTDQGCQRPYIYLCLVLE</variation>
    <location>
        <begin position="1"/>
        <end position="45"/>
    </location>
</feature>
<feature type="splice variant" id="VSP_031489" description="In isoform 2." evidence="3 4">
    <original>KFNFVAKKLHRRLLQLGGSALLPPCLGDDQHELGPDAAIDPWVGDLWEKIMVMYPVPLDIPEIPHGVP</original>
    <variation>N</variation>
    <location>
        <begin position="104"/>
        <end position="171"/>
    </location>
</feature>
<feature type="splice variant" id="VSP_031490" description="In isoform 3." evidence="4">
    <original>NFLFFGCR</original>
    <variation>EYWSSKAV</variation>
    <location>
        <begin position="481"/>
        <end position="488"/>
    </location>
</feature>
<feature type="splice variant" id="VSP_031491" description="In isoform 3." evidence="4">
    <location>
        <begin position="489"/>
        <end position="598"/>
    </location>
</feature>
<keyword id="KW-0025">Alternative splicing</keyword>
<keyword id="KW-0963">Cytoplasm</keyword>
<keyword id="KW-0274">FAD</keyword>
<keyword id="KW-0285">Flavoprotein</keyword>
<keyword id="KW-0288">FMN</keyword>
<keyword id="KW-0521">NADP</keyword>
<keyword id="KW-0560">Oxidoreductase</keyword>
<keyword id="KW-1185">Reference proteome</keyword>
<protein>
    <recommendedName>
        <fullName evidence="2">NADPH-dependent diflavin oxidoreductase 1</fullName>
        <ecNumber evidence="2">1.18.1.-</ecNumber>
    </recommendedName>
    <alternativeName>
        <fullName evidence="2">NADPH-dependent FMN and FAD-containing oxidoreductase</fullName>
    </alternativeName>
</protein>
<sequence>MQVPQLLVLFGSQTGTAQDEAERLGREARRRRLGCRVQALDSYSVANLIREPLVIFVCATTGQGDPPDNMKNFWRFIFRKSLPSSSLCQMDFAVLGLGDSSYAKFNFVAKKLHRRLLQLGGSALLPPCLGDDQHELGPDAAIDPWVGDLWEKIMVMYPVPLDIPEIPHGVPLPSKFIFQFLQEVPSIGAEELNIASSAPQTPPSELQPFLAPVITNQRVTGPQHFQDVRLIEFDITDSNISFAAGDVVFILPSNSEAHTQQFCQVLCLDPNQFFTLKPREPGVPDPPGLPQPCTVWNLVSQYLDIASVPRRSFFELLACLSQHALEREKLLELSSARGQEELWEYCSRPRRTILEVLCDFPHTAGAIPPDYLLDLIPRIRPRAFSIASSLLAHPRRLQILVAVVKYQTRLKEPRHGLCSSWLASLNPGQAGPVRVPLWVRPGSLVFPKTPDTPIIMVGAGTGVAPFRAAIQERVAHGQTGNFLFFGCRQRDQDFYWQTEWQKLEQKGWLTLVTAFSREQEQKVYVQHRLRELGPLVWELLDGQGAYFYLAGNAKYLPTDVSEALMSIFQEEGRLSTADASAYLARLQQTLRFQTETWA</sequence>